<gene>
    <name type="primary">b4</name>
</gene>
<accession>P15308</accession>
<accession>Q6LEB8</accession>
<keyword id="KW-0002">3D-structure</keyword>
<keyword id="KW-0158">Chromosome</keyword>
<keyword id="KW-0217">Developmental protein</keyword>
<keyword id="KW-0238">DNA-binding</keyword>
<keyword id="KW-0539">Nucleus</keyword>
<keyword id="KW-1185">Reference proteome</keyword>
<keyword id="KW-0677">Repeat</keyword>
<name>B4_XENLA</name>
<feature type="chain" id="PRO_0000196002" description="Protein B4">
    <location>
        <begin position="1"/>
        <end position="273"/>
    </location>
</feature>
<feature type="domain" description="H15" evidence="1">
    <location>
        <begin position="40"/>
        <end position="118"/>
    </location>
</feature>
<feature type="repeat" description="1">
    <location>
        <begin position="189"/>
        <end position="198"/>
    </location>
</feature>
<feature type="repeat" description="2">
    <location>
        <begin position="199"/>
        <end position="208"/>
    </location>
</feature>
<feature type="repeat" description="3">
    <location>
        <begin position="209"/>
        <end position="217"/>
    </location>
</feature>
<feature type="region of interest" description="Disordered" evidence="2">
    <location>
        <begin position="1"/>
        <end position="24"/>
    </location>
</feature>
<feature type="region of interest" description="Disordered" evidence="2">
    <location>
        <begin position="120"/>
        <end position="273"/>
    </location>
</feature>
<feature type="region of interest" description="3 X 10 AA tandem repeats">
    <location>
        <begin position="189"/>
        <end position="217"/>
    </location>
</feature>
<feature type="compositionally biased region" description="Basic and acidic residues" evidence="2">
    <location>
        <begin position="154"/>
        <end position="256"/>
    </location>
</feature>
<feature type="compositionally biased region" description="Basic residues" evidence="2">
    <location>
        <begin position="264"/>
        <end position="273"/>
    </location>
</feature>
<comment type="subunit">
    <text evidence="3">Interacts with nap1l1.</text>
</comment>
<comment type="subcellular location">
    <subcellularLocation>
        <location evidence="1 4">Nucleus</location>
    </subcellularLocation>
    <subcellularLocation>
        <location evidence="1 4">Chromosome</location>
    </subcellularLocation>
</comment>
<comment type="developmental stage">
    <text evidence="4">Expressed maternally. Abundant in oocytes, with expression levels remaining constant during the blastula stage. Expression starts to decline during the gastrula stage and is barely detectable by the neurula stage.</text>
</comment>
<comment type="similarity">
    <text evidence="1">Belongs to the histone H1/H5 family.</text>
</comment>
<reference key="1">
    <citation type="journal article" date="1988" name="Genes Dev.">
        <title>Expression of a histone H1-like protein is restricted to early Xenopus development.</title>
        <authorList>
            <person name="Smith R.C."/>
            <person name="Dworkin-Rastl E."/>
            <person name="Dworkin M.B."/>
        </authorList>
    </citation>
    <scope>NUCLEOTIDE SEQUENCE [MRNA]</scope>
    <scope>SUBCELLULAR LOCATION</scope>
    <scope>DEVELOPMENTAL STAGE</scope>
    <source>
        <tissue>Egg</tissue>
    </source>
</reference>
<reference key="2">
    <citation type="journal article" date="1994" name="Gene">
        <title>Xenopus laevis B4, an intron-containing oocyte-specific linker histone-encoding gene.</title>
        <authorList>
            <person name="Cho H."/>
            <person name="Wolffe A.P."/>
        </authorList>
    </citation>
    <scope>NUCLEOTIDE SEQUENCE [GENOMIC DNA] OF 1-21</scope>
    <source>
        <tissue>Skeletal muscle</tissue>
    </source>
</reference>
<reference key="3">
    <citation type="journal article" date="2005" name="Proc. Natl. Acad. Sci. U.S.A.">
        <title>Nucleosome assembly protein-1 is a linker histone chaperone in Xenopus eggs.</title>
        <authorList>
            <person name="Shintomi K."/>
            <person name="Iwabuchi M."/>
            <person name="Saeki H."/>
            <person name="Ura K."/>
            <person name="Kishimoto T."/>
            <person name="Ohsumi K."/>
        </authorList>
    </citation>
    <scope>INTERACTION WITH NAP1L1</scope>
</reference>
<organism>
    <name type="scientific">Xenopus laevis</name>
    <name type="common">African clawed frog</name>
    <dbReference type="NCBI Taxonomy" id="8355"/>
    <lineage>
        <taxon>Eukaryota</taxon>
        <taxon>Metazoa</taxon>
        <taxon>Chordata</taxon>
        <taxon>Craniata</taxon>
        <taxon>Vertebrata</taxon>
        <taxon>Euteleostomi</taxon>
        <taxon>Amphibia</taxon>
        <taxon>Batrachia</taxon>
        <taxon>Anura</taxon>
        <taxon>Pipoidea</taxon>
        <taxon>Pipidae</taxon>
        <taxon>Xenopodinae</taxon>
        <taxon>Xenopus</taxon>
        <taxon>Xenopus</taxon>
    </lineage>
</organism>
<sequence>MAPKKAVAAPEGGNKENAAVKGSSKVKVKRKSIKLVKTQSHPPTLSMVVEVLKKNTERKGTSVQAIRTRILSAHPTVDPLRLKFLLRTALNKGLEKGILIRPLNSSATGATGRFKLAKPVKTTKAGKENVASENVDPNAEQETQKKAPKKEKKAKTEKEPKGEKTKAVAKKAKEDSDEKPKVAKSKKDKEAKEVDKANKEAKEVDKANKEAKEVDKAPAKKPKAKTEAAKAEGGGKAKKEPPKAKAKDVKAQKDSTDEGAPVKAGKKGKKVTN</sequence>
<dbReference type="EMBL" id="X13855">
    <property type="protein sequence ID" value="CAA32067.1"/>
    <property type="molecule type" value="mRNA"/>
</dbReference>
<dbReference type="EMBL" id="M36655">
    <property type="protein sequence ID" value="AAA49739.1"/>
    <property type="molecule type" value="mRNA"/>
</dbReference>
<dbReference type="EMBL" id="L22845">
    <property type="protein sequence ID" value="AAA20678.2"/>
    <property type="molecule type" value="Genomic_DNA"/>
</dbReference>
<dbReference type="PIR" id="A31215">
    <property type="entry name" value="A31215"/>
</dbReference>
<dbReference type="PDB" id="7KBF">
    <property type="method" value="EM"/>
    <property type="resolution" value="4.42 A"/>
    <property type="chains" value="K=1-273"/>
</dbReference>
<dbReference type="PDBsum" id="7KBF"/>
<dbReference type="EMDB" id="EMD-22792"/>
<dbReference type="SMR" id="P15308"/>
<dbReference type="AGR" id="Xenbase:XB-GENE-6252180"/>
<dbReference type="Xenbase" id="XB-GENE-6252180">
    <property type="gene designation" value="h1-8.S"/>
</dbReference>
<dbReference type="Proteomes" id="UP000186698">
    <property type="component" value="Unplaced"/>
</dbReference>
<dbReference type="GO" id="GO:0000786">
    <property type="term" value="C:nucleosome"/>
    <property type="evidence" value="ECO:0007669"/>
    <property type="project" value="InterPro"/>
</dbReference>
<dbReference type="GO" id="GO:0005634">
    <property type="term" value="C:nucleus"/>
    <property type="evidence" value="ECO:0000314"/>
    <property type="project" value="UniProtKB"/>
</dbReference>
<dbReference type="GO" id="GO:0003677">
    <property type="term" value="F:DNA binding"/>
    <property type="evidence" value="ECO:0007669"/>
    <property type="project" value="UniProtKB-KW"/>
</dbReference>
<dbReference type="GO" id="GO:0006334">
    <property type="term" value="P:nucleosome assembly"/>
    <property type="evidence" value="ECO:0007669"/>
    <property type="project" value="InterPro"/>
</dbReference>
<dbReference type="CDD" id="cd00073">
    <property type="entry name" value="H15"/>
    <property type="match status" value="1"/>
</dbReference>
<dbReference type="FunFam" id="1.10.10.10:FF:000393">
    <property type="entry name" value="Oocyte-specific H1 histone"/>
    <property type="match status" value="1"/>
</dbReference>
<dbReference type="Gene3D" id="1.10.10.10">
    <property type="entry name" value="Winged helix-like DNA-binding domain superfamily/Winged helix DNA-binding domain"/>
    <property type="match status" value="1"/>
</dbReference>
<dbReference type="InterPro" id="IPR005818">
    <property type="entry name" value="Histone_H1/H5_H15"/>
</dbReference>
<dbReference type="InterPro" id="IPR036388">
    <property type="entry name" value="WH-like_DNA-bd_sf"/>
</dbReference>
<dbReference type="InterPro" id="IPR036390">
    <property type="entry name" value="WH_DNA-bd_sf"/>
</dbReference>
<dbReference type="Pfam" id="PF00538">
    <property type="entry name" value="Linker_histone"/>
    <property type="match status" value="1"/>
</dbReference>
<dbReference type="SMART" id="SM00526">
    <property type="entry name" value="H15"/>
    <property type="match status" value="1"/>
</dbReference>
<dbReference type="SUPFAM" id="SSF46785">
    <property type="entry name" value="Winged helix' DNA-binding domain"/>
    <property type="match status" value="1"/>
</dbReference>
<dbReference type="PROSITE" id="PS51504">
    <property type="entry name" value="H15"/>
    <property type="match status" value="1"/>
</dbReference>
<evidence type="ECO:0000255" key="1">
    <source>
        <dbReference type="PROSITE-ProRule" id="PRU00837"/>
    </source>
</evidence>
<evidence type="ECO:0000256" key="2">
    <source>
        <dbReference type="SAM" id="MobiDB-lite"/>
    </source>
</evidence>
<evidence type="ECO:0000269" key="3">
    <source>
    </source>
</evidence>
<evidence type="ECO:0000269" key="4">
    <source>
    </source>
</evidence>
<protein>
    <recommendedName>
        <fullName>Protein B4</fullName>
    </recommendedName>
    <alternativeName>
        <fullName>Histone H1-like protein</fullName>
    </alternativeName>
    <alternativeName>
        <fullName>Linker histone B4</fullName>
    </alternativeName>
</protein>
<proteinExistence type="evidence at protein level"/>